<name>FPG_LEGPL</name>
<feature type="initiator methionine" description="Removed" evidence="1">
    <location>
        <position position="1"/>
    </location>
</feature>
<feature type="chain" id="PRO_0000228443" description="Formamidopyrimidine-DNA glycosylase">
    <location>
        <begin position="2"/>
        <end position="274"/>
    </location>
</feature>
<feature type="zinc finger region" description="FPG-type" evidence="2">
    <location>
        <begin position="237"/>
        <end position="271"/>
    </location>
</feature>
<feature type="active site" description="Schiff-base intermediate with DNA" evidence="2">
    <location>
        <position position="2"/>
    </location>
</feature>
<feature type="active site" description="Proton donor" evidence="2">
    <location>
        <position position="3"/>
    </location>
</feature>
<feature type="active site" description="Proton donor; for beta-elimination activity" evidence="2">
    <location>
        <position position="58"/>
    </location>
</feature>
<feature type="active site" description="Proton donor; for delta-elimination activity" evidence="2">
    <location>
        <position position="261"/>
    </location>
</feature>
<feature type="binding site" evidence="2">
    <location>
        <position position="91"/>
    </location>
    <ligand>
        <name>DNA</name>
        <dbReference type="ChEBI" id="CHEBI:16991"/>
    </ligand>
</feature>
<feature type="binding site" evidence="2">
    <location>
        <position position="110"/>
    </location>
    <ligand>
        <name>DNA</name>
        <dbReference type="ChEBI" id="CHEBI:16991"/>
    </ligand>
</feature>
<feature type="binding site" evidence="2">
    <location>
        <position position="152"/>
    </location>
    <ligand>
        <name>DNA</name>
        <dbReference type="ChEBI" id="CHEBI:16991"/>
    </ligand>
</feature>
<dbReference type="EC" id="3.2.2.23" evidence="2"/>
<dbReference type="EC" id="4.2.99.18" evidence="2"/>
<dbReference type="EMBL" id="CR628337">
    <property type="protein sequence ID" value="CAH14832.1"/>
    <property type="molecule type" value="Genomic_DNA"/>
</dbReference>
<dbReference type="RefSeq" id="WP_011214788.1">
    <property type="nucleotide sequence ID" value="NC_006369.1"/>
</dbReference>
<dbReference type="SMR" id="Q5WYY6"/>
<dbReference type="KEGG" id="lpf:lpl0599"/>
<dbReference type="LegioList" id="lpl0599"/>
<dbReference type="HOGENOM" id="CLU_038423_1_1_6"/>
<dbReference type="Proteomes" id="UP000002517">
    <property type="component" value="Chromosome"/>
</dbReference>
<dbReference type="GO" id="GO:0034039">
    <property type="term" value="F:8-oxo-7,8-dihydroguanine DNA N-glycosylase activity"/>
    <property type="evidence" value="ECO:0007669"/>
    <property type="project" value="TreeGrafter"/>
</dbReference>
<dbReference type="GO" id="GO:0140078">
    <property type="term" value="F:class I DNA-(apurinic or apyrimidinic site) endonuclease activity"/>
    <property type="evidence" value="ECO:0007669"/>
    <property type="project" value="UniProtKB-EC"/>
</dbReference>
<dbReference type="GO" id="GO:0003684">
    <property type="term" value="F:damaged DNA binding"/>
    <property type="evidence" value="ECO:0007669"/>
    <property type="project" value="InterPro"/>
</dbReference>
<dbReference type="GO" id="GO:0008270">
    <property type="term" value="F:zinc ion binding"/>
    <property type="evidence" value="ECO:0007669"/>
    <property type="project" value="UniProtKB-UniRule"/>
</dbReference>
<dbReference type="GO" id="GO:0006284">
    <property type="term" value="P:base-excision repair"/>
    <property type="evidence" value="ECO:0007669"/>
    <property type="project" value="InterPro"/>
</dbReference>
<dbReference type="CDD" id="cd08966">
    <property type="entry name" value="EcFpg-like_N"/>
    <property type="match status" value="1"/>
</dbReference>
<dbReference type="FunFam" id="1.10.8.50:FF:000003">
    <property type="entry name" value="Formamidopyrimidine-DNA glycosylase"/>
    <property type="match status" value="1"/>
</dbReference>
<dbReference type="FunFam" id="3.20.190.10:FF:000001">
    <property type="entry name" value="Formamidopyrimidine-DNA glycosylase"/>
    <property type="match status" value="1"/>
</dbReference>
<dbReference type="Gene3D" id="1.10.8.50">
    <property type="match status" value="1"/>
</dbReference>
<dbReference type="Gene3D" id="3.20.190.10">
    <property type="entry name" value="MutM-like, N-terminal"/>
    <property type="match status" value="1"/>
</dbReference>
<dbReference type="HAMAP" id="MF_00103">
    <property type="entry name" value="Fapy_DNA_glycosyl"/>
    <property type="match status" value="1"/>
</dbReference>
<dbReference type="InterPro" id="IPR015886">
    <property type="entry name" value="DNA_glyclase/AP_lyase_DNA-bd"/>
</dbReference>
<dbReference type="InterPro" id="IPR020629">
    <property type="entry name" value="Formamido-pyr_DNA_Glyclase"/>
</dbReference>
<dbReference type="InterPro" id="IPR012319">
    <property type="entry name" value="FPG_cat"/>
</dbReference>
<dbReference type="InterPro" id="IPR035937">
    <property type="entry name" value="MutM-like_N-ter"/>
</dbReference>
<dbReference type="InterPro" id="IPR010979">
    <property type="entry name" value="Ribosomal_uS13-like_H2TH"/>
</dbReference>
<dbReference type="InterPro" id="IPR000214">
    <property type="entry name" value="Znf_DNA_glyclase/AP_lyase"/>
</dbReference>
<dbReference type="InterPro" id="IPR010663">
    <property type="entry name" value="Znf_FPG/IleRS"/>
</dbReference>
<dbReference type="NCBIfam" id="TIGR00577">
    <property type="entry name" value="fpg"/>
    <property type="match status" value="1"/>
</dbReference>
<dbReference type="NCBIfam" id="NF002211">
    <property type="entry name" value="PRK01103.1"/>
    <property type="match status" value="1"/>
</dbReference>
<dbReference type="PANTHER" id="PTHR22993">
    <property type="entry name" value="FORMAMIDOPYRIMIDINE-DNA GLYCOSYLASE"/>
    <property type="match status" value="1"/>
</dbReference>
<dbReference type="PANTHER" id="PTHR22993:SF9">
    <property type="entry name" value="FORMAMIDOPYRIMIDINE-DNA GLYCOSYLASE"/>
    <property type="match status" value="1"/>
</dbReference>
<dbReference type="Pfam" id="PF01149">
    <property type="entry name" value="Fapy_DNA_glyco"/>
    <property type="match status" value="1"/>
</dbReference>
<dbReference type="Pfam" id="PF06831">
    <property type="entry name" value="H2TH"/>
    <property type="match status" value="1"/>
</dbReference>
<dbReference type="Pfam" id="PF06827">
    <property type="entry name" value="zf-FPG_IleRS"/>
    <property type="match status" value="1"/>
</dbReference>
<dbReference type="SMART" id="SM00898">
    <property type="entry name" value="Fapy_DNA_glyco"/>
    <property type="match status" value="1"/>
</dbReference>
<dbReference type="SMART" id="SM01232">
    <property type="entry name" value="H2TH"/>
    <property type="match status" value="1"/>
</dbReference>
<dbReference type="SUPFAM" id="SSF57716">
    <property type="entry name" value="Glucocorticoid receptor-like (DNA-binding domain)"/>
    <property type="match status" value="1"/>
</dbReference>
<dbReference type="SUPFAM" id="SSF81624">
    <property type="entry name" value="N-terminal domain of MutM-like DNA repair proteins"/>
    <property type="match status" value="1"/>
</dbReference>
<dbReference type="SUPFAM" id="SSF46946">
    <property type="entry name" value="S13-like H2TH domain"/>
    <property type="match status" value="1"/>
</dbReference>
<dbReference type="PROSITE" id="PS51068">
    <property type="entry name" value="FPG_CAT"/>
    <property type="match status" value="1"/>
</dbReference>
<dbReference type="PROSITE" id="PS51066">
    <property type="entry name" value="ZF_FPG_2"/>
    <property type="match status" value="1"/>
</dbReference>
<reference key="1">
    <citation type="journal article" date="2004" name="Nat. Genet.">
        <title>Evidence in the Legionella pneumophila genome for exploitation of host cell functions and high genome plasticity.</title>
        <authorList>
            <person name="Cazalet C."/>
            <person name="Rusniok C."/>
            <person name="Brueggemann H."/>
            <person name="Zidane N."/>
            <person name="Magnier A."/>
            <person name="Ma L."/>
            <person name="Tichit M."/>
            <person name="Jarraud S."/>
            <person name="Bouchier C."/>
            <person name="Vandenesch F."/>
            <person name="Kunst F."/>
            <person name="Etienne J."/>
            <person name="Glaser P."/>
            <person name="Buchrieser C."/>
        </authorList>
    </citation>
    <scope>NUCLEOTIDE SEQUENCE [LARGE SCALE GENOMIC DNA]</scope>
    <source>
        <strain>Lens</strain>
    </source>
</reference>
<comment type="function">
    <text evidence="2">Involved in base excision repair of DNA damaged by oxidation or by mutagenic agents. Acts as a DNA glycosylase that recognizes and removes damaged bases. Has a preference for oxidized purines, such as 7,8-dihydro-8-oxoguanine (8-oxoG). Has AP (apurinic/apyrimidinic) lyase activity and introduces nicks in the DNA strand. Cleaves the DNA backbone by beta-delta elimination to generate a single-strand break at the site of the removed base with both 3'- and 5'-phosphates.</text>
</comment>
<comment type="catalytic activity">
    <reaction evidence="2">
        <text>Hydrolysis of DNA containing ring-opened 7-methylguanine residues, releasing 2,6-diamino-4-hydroxy-5-(N-methyl)formamidopyrimidine.</text>
        <dbReference type="EC" id="3.2.2.23"/>
    </reaction>
</comment>
<comment type="catalytic activity">
    <reaction evidence="2">
        <text>2'-deoxyribonucleotide-(2'-deoxyribose 5'-phosphate)-2'-deoxyribonucleotide-DNA = a 3'-end 2'-deoxyribonucleotide-(2,3-dehydro-2,3-deoxyribose 5'-phosphate)-DNA + a 5'-end 5'-phospho-2'-deoxyribonucleoside-DNA + H(+)</text>
        <dbReference type="Rhea" id="RHEA:66592"/>
        <dbReference type="Rhea" id="RHEA-COMP:13180"/>
        <dbReference type="Rhea" id="RHEA-COMP:16897"/>
        <dbReference type="Rhea" id="RHEA-COMP:17067"/>
        <dbReference type="ChEBI" id="CHEBI:15378"/>
        <dbReference type="ChEBI" id="CHEBI:136412"/>
        <dbReference type="ChEBI" id="CHEBI:157695"/>
        <dbReference type="ChEBI" id="CHEBI:167181"/>
        <dbReference type="EC" id="4.2.99.18"/>
    </reaction>
</comment>
<comment type="cofactor">
    <cofactor evidence="2">
        <name>Zn(2+)</name>
        <dbReference type="ChEBI" id="CHEBI:29105"/>
    </cofactor>
    <text evidence="2">Binds 1 zinc ion per subunit.</text>
</comment>
<comment type="subunit">
    <text evidence="2">Monomer.</text>
</comment>
<comment type="similarity">
    <text evidence="2">Belongs to the FPG family.</text>
</comment>
<organism>
    <name type="scientific">Legionella pneumophila (strain Lens)</name>
    <dbReference type="NCBI Taxonomy" id="297245"/>
    <lineage>
        <taxon>Bacteria</taxon>
        <taxon>Pseudomonadati</taxon>
        <taxon>Pseudomonadota</taxon>
        <taxon>Gammaproteobacteria</taxon>
        <taxon>Legionellales</taxon>
        <taxon>Legionellaceae</taxon>
        <taxon>Legionella</taxon>
    </lineage>
</organism>
<proteinExistence type="inferred from homology"/>
<sequence length="274" mass="30816">MPELPEVETTKQGIKPHLEGCMITSVQVRNQKLRLPVPLNLNELCEGKHITAITRRGKYILLHMDKGYLLIHLGMSGHLRIVSQTANPQKHDHVDLHINNGLALRFRDPRRFGLFIYIDENPYQHPLLAHLGPEPLSDDFNSEYLLRKAANKSQSIKSFIMDSQIVVGIGNIYAAESLFLAKIHPNTSAKKITTEEFNSLTGHIKKILESAIEAGGTTLRDFYSSDGKPGYFRFALKVYGRKNLPCLVCENKIETVVIAGRHSAFCPHCQPIIT</sequence>
<protein>
    <recommendedName>
        <fullName evidence="2">Formamidopyrimidine-DNA glycosylase</fullName>
        <shortName evidence="2">Fapy-DNA glycosylase</shortName>
        <ecNumber evidence="2">3.2.2.23</ecNumber>
    </recommendedName>
    <alternativeName>
        <fullName evidence="2">DNA-(apurinic or apyrimidinic site) lyase MutM</fullName>
        <shortName evidence="2">AP lyase MutM</shortName>
        <ecNumber evidence="2">4.2.99.18</ecNumber>
    </alternativeName>
</protein>
<keyword id="KW-0227">DNA damage</keyword>
<keyword id="KW-0234">DNA repair</keyword>
<keyword id="KW-0238">DNA-binding</keyword>
<keyword id="KW-0326">Glycosidase</keyword>
<keyword id="KW-0378">Hydrolase</keyword>
<keyword id="KW-0456">Lyase</keyword>
<keyword id="KW-0479">Metal-binding</keyword>
<keyword id="KW-0511">Multifunctional enzyme</keyword>
<keyword id="KW-0862">Zinc</keyword>
<keyword id="KW-0863">Zinc-finger</keyword>
<accession>Q5WYY6</accession>
<gene>
    <name evidence="2" type="primary">mutM</name>
    <name evidence="2" type="synonym">fpg</name>
    <name type="ordered locus">lpl0599</name>
</gene>
<evidence type="ECO:0000250" key="1"/>
<evidence type="ECO:0000255" key="2">
    <source>
        <dbReference type="HAMAP-Rule" id="MF_00103"/>
    </source>
</evidence>